<proteinExistence type="inferred from homology"/>
<comment type="function">
    <text evidence="1">One of the primary rRNA binding proteins. Required for association of the 30S and 50S subunits to form the 70S ribosome, for tRNA binding and peptide bond formation. It has been suggested to have peptidyltransferase activity; this is somewhat controversial. Makes several contacts with the 16S rRNA in the 70S ribosome.</text>
</comment>
<comment type="subunit">
    <text evidence="1">Part of the 50S ribosomal subunit. Forms a bridge to the 30S subunit in the 70S ribosome.</text>
</comment>
<comment type="similarity">
    <text evidence="1">Belongs to the universal ribosomal protein uL2 family.</text>
</comment>
<reference key="1">
    <citation type="journal article" date="2009" name="PLoS Pathog.">
        <title>Molecular evolutionary consequences of niche restriction in Francisella tularensis, a facultative intracellular pathogen.</title>
        <authorList>
            <person name="Larsson P."/>
            <person name="Elfsmark D."/>
            <person name="Svensson K."/>
            <person name="Wikstroem P."/>
            <person name="Forsman M."/>
            <person name="Brettin T."/>
            <person name="Keim P."/>
            <person name="Johansson A."/>
        </authorList>
    </citation>
    <scope>NUCLEOTIDE SEQUENCE [LARGE SCALE GENOMIC DNA]</scope>
    <source>
        <strain>FSC147</strain>
    </source>
</reference>
<feature type="chain" id="PRO_1000141556" description="Large ribosomal subunit protein uL2">
    <location>
        <begin position="1"/>
        <end position="274"/>
    </location>
</feature>
<feature type="region of interest" description="Disordered" evidence="2">
    <location>
        <begin position="224"/>
        <end position="274"/>
    </location>
</feature>
<feature type="compositionally biased region" description="Basic residues" evidence="2">
    <location>
        <begin position="257"/>
        <end position="274"/>
    </location>
</feature>
<name>RL2_FRATM</name>
<accession>B2SDY2</accession>
<evidence type="ECO:0000255" key="1">
    <source>
        <dbReference type="HAMAP-Rule" id="MF_01320"/>
    </source>
</evidence>
<evidence type="ECO:0000256" key="2">
    <source>
        <dbReference type="SAM" id="MobiDB-lite"/>
    </source>
</evidence>
<evidence type="ECO:0000305" key="3"/>
<keyword id="KW-0687">Ribonucleoprotein</keyword>
<keyword id="KW-0689">Ribosomal protein</keyword>
<keyword id="KW-0694">RNA-binding</keyword>
<keyword id="KW-0699">rRNA-binding</keyword>
<protein>
    <recommendedName>
        <fullName evidence="1">Large ribosomal subunit protein uL2</fullName>
    </recommendedName>
    <alternativeName>
        <fullName evidence="3">50S ribosomal protein L2</fullName>
    </alternativeName>
</protein>
<sequence>MIEIKKAKPTSPGRRHVVSVKNTELHTGKPFKGLVEVKKSKAGRNNTGRITVRHQGGGHKQHYRVVDFKRNKDDITAKVERIEYDPNRSANIALVLYADGERRYIVAPKGLKKDMSVISGEKVDVAVGNCMPLRNIPLGTVIHNIEMKPKKGAQMIRSAGTFAQLVGKDNAYAIIRLRSGEMRRVLLDCRAVIGVVSNSEHNLKSLGKAGAKRWRGIRPTVRGVAMNPVDHPHGGGEGRTSGGRHPVTPWGIPTKGYKTRRNKRSNKLIVQKRK</sequence>
<gene>
    <name evidence="1" type="primary">rplB</name>
    <name type="ordered locus">FTM_1524</name>
</gene>
<dbReference type="EMBL" id="CP000915">
    <property type="protein sequence ID" value="ACD31346.1"/>
    <property type="molecule type" value="Genomic_DNA"/>
</dbReference>
<dbReference type="SMR" id="B2SDY2"/>
<dbReference type="KEGG" id="ftm:FTM_1524"/>
<dbReference type="HOGENOM" id="CLU_036235_2_1_6"/>
<dbReference type="GO" id="GO:0015934">
    <property type="term" value="C:large ribosomal subunit"/>
    <property type="evidence" value="ECO:0007669"/>
    <property type="project" value="InterPro"/>
</dbReference>
<dbReference type="GO" id="GO:0019843">
    <property type="term" value="F:rRNA binding"/>
    <property type="evidence" value="ECO:0007669"/>
    <property type="project" value="UniProtKB-UniRule"/>
</dbReference>
<dbReference type="GO" id="GO:0003735">
    <property type="term" value="F:structural constituent of ribosome"/>
    <property type="evidence" value="ECO:0007669"/>
    <property type="project" value="InterPro"/>
</dbReference>
<dbReference type="GO" id="GO:0016740">
    <property type="term" value="F:transferase activity"/>
    <property type="evidence" value="ECO:0007669"/>
    <property type="project" value="InterPro"/>
</dbReference>
<dbReference type="GO" id="GO:0002181">
    <property type="term" value="P:cytoplasmic translation"/>
    <property type="evidence" value="ECO:0007669"/>
    <property type="project" value="TreeGrafter"/>
</dbReference>
<dbReference type="FunFam" id="2.30.30.30:FF:000001">
    <property type="entry name" value="50S ribosomal protein L2"/>
    <property type="match status" value="1"/>
</dbReference>
<dbReference type="FunFam" id="2.40.50.140:FF:000003">
    <property type="entry name" value="50S ribosomal protein L2"/>
    <property type="match status" value="1"/>
</dbReference>
<dbReference type="FunFam" id="4.10.950.10:FF:000001">
    <property type="entry name" value="50S ribosomal protein L2"/>
    <property type="match status" value="1"/>
</dbReference>
<dbReference type="Gene3D" id="2.30.30.30">
    <property type="match status" value="1"/>
</dbReference>
<dbReference type="Gene3D" id="2.40.50.140">
    <property type="entry name" value="Nucleic acid-binding proteins"/>
    <property type="match status" value="1"/>
</dbReference>
<dbReference type="Gene3D" id="4.10.950.10">
    <property type="entry name" value="Ribosomal protein L2, domain 3"/>
    <property type="match status" value="1"/>
</dbReference>
<dbReference type="HAMAP" id="MF_01320_B">
    <property type="entry name" value="Ribosomal_uL2_B"/>
    <property type="match status" value="1"/>
</dbReference>
<dbReference type="InterPro" id="IPR012340">
    <property type="entry name" value="NA-bd_OB-fold"/>
</dbReference>
<dbReference type="InterPro" id="IPR014722">
    <property type="entry name" value="Rib_uL2_dom2"/>
</dbReference>
<dbReference type="InterPro" id="IPR002171">
    <property type="entry name" value="Ribosomal_uL2"/>
</dbReference>
<dbReference type="InterPro" id="IPR005880">
    <property type="entry name" value="Ribosomal_uL2_bac/org-type"/>
</dbReference>
<dbReference type="InterPro" id="IPR022669">
    <property type="entry name" value="Ribosomal_uL2_C"/>
</dbReference>
<dbReference type="InterPro" id="IPR022671">
    <property type="entry name" value="Ribosomal_uL2_CS"/>
</dbReference>
<dbReference type="InterPro" id="IPR014726">
    <property type="entry name" value="Ribosomal_uL2_dom3"/>
</dbReference>
<dbReference type="InterPro" id="IPR022666">
    <property type="entry name" value="Ribosomal_uL2_RNA-bd_dom"/>
</dbReference>
<dbReference type="InterPro" id="IPR008991">
    <property type="entry name" value="Translation_prot_SH3-like_sf"/>
</dbReference>
<dbReference type="NCBIfam" id="TIGR01171">
    <property type="entry name" value="rplB_bact"/>
    <property type="match status" value="1"/>
</dbReference>
<dbReference type="PANTHER" id="PTHR13691:SF5">
    <property type="entry name" value="LARGE RIBOSOMAL SUBUNIT PROTEIN UL2M"/>
    <property type="match status" value="1"/>
</dbReference>
<dbReference type="PANTHER" id="PTHR13691">
    <property type="entry name" value="RIBOSOMAL PROTEIN L2"/>
    <property type="match status" value="1"/>
</dbReference>
<dbReference type="Pfam" id="PF00181">
    <property type="entry name" value="Ribosomal_L2"/>
    <property type="match status" value="1"/>
</dbReference>
<dbReference type="Pfam" id="PF03947">
    <property type="entry name" value="Ribosomal_L2_C"/>
    <property type="match status" value="1"/>
</dbReference>
<dbReference type="PIRSF" id="PIRSF002158">
    <property type="entry name" value="Ribosomal_L2"/>
    <property type="match status" value="1"/>
</dbReference>
<dbReference type="SMART" id="SM01383">
    <property type="entry name" value="Ribosomal_L2"/>
    <property type="match status" value="1"/>
</dbReference>
<dbReference type="SMART" id="SM01382">
    <property type="entry name" value="Ribosomal_L2_C"/>
    <property type="match status" value="1"/>
</dbReference>
<dbReference type="SUPFAM" id="SSF50249">
    <property type="entry name" value="Nucleic acid-binding proteins"/>
    <property type="match status" value="1"/>
</dbReference>
<dbReference type="SUPFAM" id="SSF50104">
    <property type="entry name" value="Translation proteins SH3-like domain"/>
    <property type="match status" value="1"/>
</dbReference>
<dbReference type="PROSITE" id="PS00467">
    <property type="entry name" value="RIBOSOMAL_L2"/>
    <property type="match status" value="1"/>
</dbReference>
<organism>
    <name type="scientific">Francisella tularensis subsp. mediasiatica (strain FSC147)</name>
    <dbReference type="NCBI Taxonomy" id="441952"/>
    <lineage>
        <taxon>Bacteria</taxon>
        <taxon>Pseudomonadati</taxon>
        <taxon>Pseudomonadota</taxon>
        <taxon>Gammaproteobacteria</taxon>
        <taxon>Thiotrichales</taxon>
        <taxon>Francisellaceae</taxon>
        <taxon>Francisella</taxon>
    </lineage>
</organism>